<proteinExistence type="inferred from homology"/>
<keyword id="KW-0067">ATP-binding</keyword>
<keyword id="KW-0997">Cell inner membrane</keyword>
<keyword id="KW-1003">Cell membrane</keyword>
<keyword id="KW-0963">Cytoplasm</keyword>
<keyword id="KW-0472">Membrane</keyword>
<keyword id="KW-0479">Metal-binding</keyword>
<keyword id="KW-0547">Nucleotide-binding</keyword>
<keyword id="KW-0653">Protein transport</keyword>
<keyword id="KW-1278">Translocase</keyword>
<keyword id="KW-0811">Translocation</keyword>
<keyword id="KW-0813">Transport</keyword>
<keyword id="KW-0862">Zinc</keyword>
<accession>Q11DY9</accession>
<gene>
    <name evidence="1" type="primary">secA</name>
    <name type="ordered locus">Meso_3014</name>
</gene>
<name>SECA_CHESB</name>
<sequence>MVSLGGLARKIFGSSNERRVRALQPRAEQIGALEKEMQALSDEALRGKTDEFRKKLADGADLDDLLVPAFAVVREAARRVLGLRPFDVQLIGGMVLHQGAIAEMKTGEGKTLVATLPVYLNALTGKGVHVVTVNDYLARRDAEWMGRVYGFLGLTTGVIVHGLSDEERRAAYACDVTYATNNELGFDYLRDNMKYERAQMVQRGHAYAIVDEVDSILVDEARTPLIISGPLDDRSELYNTIDTFILKLEPADYEVDEKQRTATFTEEGTEKVENLLREANLFKGDSLYDVENVAIVHHLNNALKAHRLFQRDKDYIVRNDEVIIIDEFTGRMMPGRRYSDGLHQALEAKEHVKIQPENQTLASITFQNYFRMYGKLAGMTGTASTEAEEFGNIYGLDVVEIPTNLPVSRIDEDDEVYRTVEEKYRAIVREIKEAREKGQPILVGTTSIEKSEYLAERLRKDGLKDFEILNARHHEREAYIVSQAGKPGAITIATNMAGRGTDIQLGGNADMRIHQELGDMPAGPERDAKEKAIREDVQRLKEKALAAGGLYVLATERHESRRIDNQLRGRSGRQGDPGRSKFFLSLQDDLMRIFGSDRMDGMLQKLGLKEDEAIVHPWINKALEKAQKKVEARNFDIRKNLLKYDDVMNDQRKVVFEQRIELMDGENLSETVAEMRQDVIDDLVERHIPANAYAEQWDAKGLKEGVLQYLNLDLPIDEWVKEEGIAEDDIRERITEAANKAAAERAERFGPDIMTYVEKSIVLQTLDHLWREHLVNLDHLRSVIGFRGYAQRDPLNEYKSEAFELFQAMLGNLRQAVTAQLMRVELVREAAEAPPPPAPPAMQAHHLDATTGEDEFANGDTMTLARADARIVPAEQRDPNDPSTWGKVGRNEACPCGSGKKYKHCHGTFA</sequence>
<feature type="chain" id="PRO_0000318375" description="Protein translocase subunit SecA">
    <location>
        <begin position="1"/>
        <end position="910"/>
    </location>
</feature>
<feature type="binding site" evidence="1">
    <location>
        <position position="89"/>
    </location>
    <ligand>
        <name>ATP</name>
        <dbReference type="ChEBI" id="CHEBI:30616"/>
    </ligand>
</feature>
<feature type="binding site" evidence="1">
    <location>
        <begin position="107"/>
        <end position="111"/>
    </location>
    <ligand>
        <name>ATP</name>
        <dbReference type="ChEBI" id="CHEBI:30616"/>
    </ligand>
</feature>
<feature type="binding site" evidence="1">
    <location>
        <position position="502"/>
    </location>
    <ligand>
        <name>ATP</name>
        <dbReference type="ChEBI" id="CHEBI:30616"/>
    </ligand>
</feature>
<feature type="binding site" evidence="1">
    <location>
        <position position="894"/>
    </location>
    <ligand>
        <name>Zn(2+)</name>
        <dbReference type="ChEBI" id="CHEBI:29105"/>
    </ligand>
</feature>
<feature type="binding site" evidence="1">
    <location>
        <position position="896"/>
    </location>
    <ligand>
        <name>Zn(2+)</name>
        <dbReference type="ChEBI" id="CHEBI:29105"/>
    </ligand>
</feature>
<feature type="binding site" evidence="1">
    <location>
        <position position="905"/>
    </location>
    <ligand>
        <name>Zn(2+)</name>
        <dbReference type="ChEBI" id="CHEBI:29105"/>
    </ligand>
</feature>
<feature type="binding site" evidence="1">
    <location>
        <position position="906"/>
    </location>
    <ligand>
        <name>Zn(2+)</name>
        <dbReference type="ChEBI" id="CHEBI:29105"/>
    </ligand>
</feature>
<reference key="1">
    <citation type="submission" date="2006-06" db="EMBL/GenBank/DDBJ databases">
        <title>Complete sequence of chromosome of Mesorhizobium sp. BNC1.</title>
        <authorList>
            <consortium name="US DOE Joint Genome Institute"/>
            <person name="Copeland A."/>
            <person name="Lucas S."/>
            <person name="Lapidus A."/>
            <person name="Barry K."/>
            <person name="Detter J.C."/>
            <person name="Glavina del Rio T."/>
            <person name="Hammon N."/>
            <person name="Israni S."/>
            <person name="Dalin E."/>
            <person name="Tice H."/>
            <person name="Pitluck S."/>
            <person name="Chertkov O."/>
            <person name="Brettin T."/>
            <person name="Bruce D."/>
            <person name="Han C."/>
            <person name="Tapia R."/>
            <person name="Gilna P."/>
            <person name="Schmutz J."/>
            <person name="Larimer F."/>
            <person name="Land M."/>
            <person name="Hauser L."/>
            <person name="Kyrpides N."/>
            <person name="Mikhailova N."/>
            <person name="Richardson P."/>
        </authorList>
    </citation>
    <scope>NUCLEOTIDE SEQUENCE [LARGE SCALE GENOMIC DNA]</scope>
    <source>
        <strain>BNC1</strain>
    </source>
</reference>
<evidence type="ECO:0000255" key="1">
    <source>
        <dbReference type="HAMAP-Rule" id="MF_01382"/>
    </source>
</evidence>
<protein>
    <recommendedName>
        <fullName evidence="1">Protein translocase subunit SecA</fullName>
        <ecNumber evidence="1">7.4.2.8</ecNumber>
    </recommendedName>
</protein>
<dbReference type="EC" id="7.4.2.8" evidence="1"/>
<dbReference type="EMBL" id="CP000390">
    <property type="protein sequence ID" value="ABG64386.1"/>
    <property type="molecule type" value="Genomic_DNA"/>
</dbReference>
<dbReference type="SMR" id="Q11DY9"/>
<dbReference type="STRING" id="266779.Meso_3014"/>
<dbReference type="KEGG" id="mes:Meso_3014"/>
<dbReference type="eggNOG" id="COG0653">
    <property type="taxonomic scope" value="Bacteria"/>
</dbReference>
<dbReference type="HOGENOM" id="CLU_005314_3_0_5"/>
<dbReference type="OrthoDB" id="9805579at2"/>
<dbReference type="GO" id="GO:0031522">
    <property type="term" value="C:cell envelope Sec protein transport complex"/>
    <property type="evidence" value="ECO:0007669"/>
    <property type="project" value="TreeGrafter"/>
</dbReference>
<dbReference type="GO" id="GO:0005829">
    <property type="term" value="C:cytosol"/>
    <property type="evidence" value="ECO:0007669"/>
    <property type="project" value="TreeGrafter"/>
</dbReference>
<dbReference type="GO" id="GO:0005886">
    <property type="term" value="C:plasma membrane"/>
    <property type="evidence" value="ECO:0007669"/>
    <property type="project" value="UniProtKB-SubCell"/>
</dbReference>
<dbReference type="GO" id="GO:0005524">
    <property type="term" value="F:ATP binding"/>
    <property type="evidence" value="ECO:0007669"/>
    <property type="project" value="UniProtKB-UniRule"/>
</dbReference>
<dbReference type="GO" id="GO:0046872">
    <property type="term" value="F:metal ion binding"/>
    <property type="evidence" value="ECO:0007669"/>
    <property type="project" value="UniProtKB-KW"/>
</dbReference>
<dbReference type="GO" id="GO:0008564">
    <property type="term" value="F:protein-exporting ATPase activity"/>
    <property type="evidence" value="ECO:0007669"/>
    <property type="project" value="UniProtKB-EC"/>
</dbReference>
<dbReference type="GO" id="GO:0065002">
    <property type="term" value="P:intracellular protein transmembrane transport"/>
    <property type="evidence" value="ECO:0007669"/>
    <property type="project" value="UniProtKB-UniRule"/>
</dbReference>
<dbReference type="GO" id="GO:0017038">
    <property type="term" value="P:protein import"/>
    <property type="evidence" value="ECO:0007669"/>
    <property type="project" value="InterPro"/>
</dbReference>
<dbReference type="GO" id="GO:0006605">
    <property type="term" value="P:protein targeting"/>
    <property type="evidence" value="ECO:0007669"/>
    <property type="project" value="UniProtKB-UniRule"/>
</dbReference>
<dbReference type="GO" id="GO:0043952">
    <property type="term" value="P:protein transport by the Sec complex"/>
    <property type="evidence" value="ECO:0007669"/>
    <property type="project" value="TreeGrafter"/>
</dbReference>
<dbReference type="CDD" id="cd17928">
    <property type="entry name" value="DEXDc_SecA"/>
    <property type="match status" value="1"/>
</dbReference>
<dbReference type="CDD" id="cd18803">
    <property type="entry name" value="SF2_C_secA"/>
    <property type="match status" value="1"/>
</dbReference>
<dbReference type="FunFam" id="3.90.1440.10:FF:000001">
    <property type="entry name" value="Preprotein translocase subunit SecA"/>
    <property type="match status" value="1"/>
</dbReference>
<dbReference type="FunFam" id="1.10.3060.10:FF:000003">
    <property type="entry name" value="Protein translocase subunit SecA"/>
    <property type="match status" value="1"/>
</dbReference>
<dbReference type="FunFam" id="3.40.50.300:FF:000334">
    <property type="entry name" value="Protein translocase subunit SecA"/>
    <property type="match status" value="1"/>
</dbReference>
<dbReference type="FunFam" id="3.40.50.300:FF:001790">
    <property type="entry name" value="Protein translocase subunit SecA"/>
    <property type="match status" value="1"/>
</dbReference>
<dbReference type="Gene3D" id="3.10.450.50">
    <property type="match status" value="1"/>
</dbReference>
<dbReference type="Gene3D" id="1.10.3060.10">
    <property type="entry name" value="Helical scaffold and wing domains of SecA"/>
    <property type="match status" value="1"/>
</dbReference>
<dbReference type="Gene3D" id="3.40.50.300">
    <property type="entry name" value="P-loop containing nucleotide triphosphate hydrolases"/>
    <property type="match status" value="2"/>
</dbReference>
<dbReference type="Gene3D" id="3.90.1440.10">
    <property type="entry name" value="SecA, preprotein cross-linking domain"/>
    <property type="match status" value="1"/>
</dbReference>
<dbReference type="HAMAP" id="MF_01382">
    <property type="entry name" value="SecA"/>
    <property type="match status" value="1"/>
</dbReference>
<dbReference type="InterPro" id="IPR014001">
    <property type="entry name" value="Helicase_ATP-bd"/>
</dbReference>
<dbReference type="InterPro" id="IPR001650">
    <property type="entry name" value="Helicase_C-like"/>
</dbReference>
<dbReference type="InterPro" id="IPR027417">
    <property type="entry name" value="P-loop_NTPase"/>
</dbReference>
<dbReference type="InterPro" id="IPR004027">
    <property type="entry name" value="SEC_C_motif"/>
</dbReference>
<dbReference type="InterPro" id="IPR000185">
    <property type="entry name" value="SecA"/>
</dbReference>
<dbReference type="InterPro" id="IPR020937">
    <property type="entry name" value="SecA_CS"/>
</dbReference>
<dbReference type="InterPro" id="IPR011115">
    <property type="entry name" value="SecA_DEAD"/>
</dbReference>
<dbReference type="InterPro" id="IPR014018">
    <property type="entry name" value="SecA_motor_DEAD"/>
</dbReference>
<dbReference type="InterPro" id="IPR011130">
    <property type="entry name" value="SecA_preprotein_X-link_dom"/>
</dbReference>
<dbReference type="InterPro" id="IPR044722">
    <property type="entry name" value="SecA_SF2_C"/>
</dbReference>
<dbReference type="InterPro" id="IPR011116">
    <property type="entry name" value="SecA_Wing/Scaffold"/>
</dbReference>
<dbReference type="InterPro" id="IPR036266">
    <property type="entry name" value="SecA_Wing/Scaffold_sf"/>
</dbReference>
<dbReference type="InterPro" id="IPR036670">
    <property type="entry name" value="SecA_X-link_sf"/>
</dbReference>
<dbReference type="NCBIfam" id="NF009538">
    <property type="entry name" value="PRK12904.1"/>
    <property type="match status" value="1"/>
</dbReference>
<dbReference type="NCBIfam" id="TIGR00963">
    <property type="entry name" value="secA"/>
    <property type="match status" value="1"/>
</dbReference>
<dbReference type="PANTHER" id="PTHR30612:SF0">
    <property type="entry name" value="CHLOROPLAST PROTEIN-TRANSPORTING ATPASE"/>
    <property type="match status" value="1"/>
</dbReference>
<dbReference type="PANTHER" id="PTHR30612">
    <property type="entry name" value="SECA INNER MEMBRANE COMPONENT OF SEC PROTEIN SECRETION SYSTEM"/>
    <property type="match status" value="1"/>
</dbReference>
<dbReference type="Pfam" id="PF21090">
    <property type="entry name" value="P-loop_SecA"/>
    <property type="match status" value="1"/>
</dbReference>
<dbReference type="Pfam" id="PF02810">
    <property type="entry name" value="SEC-C"/>
    <property type="match status" value="1"/>
</dbReference>
<dbReference type="Pfam" id="PF07517">
    <property type="entry name" value="SecA_DEAD"/>
    <property type="match status" value="1"/>
</dbReference>
<dbReference type="Pfam" id="PF01043">
    <property type="entry name" value="SecA_PP_bind"/>
    <property type="match status" value="1"/>
</dbReference>
<dbReference type="Pfam" id="PF07516">
    <property type="entry name" value="SecA_SW"/>
    <property type="match status" value="1"/>
</dbReference>
<dbReference type="PRINTS" id="PR00906">
    <property type="entry name" value="SECA"/>
</dbReference>
<dbReference type="SMART" id="SM00957">
    <property type="entry name" value="SecA_DEAD"/>
    <property type="match status" value="1"/>
</dbReference>
<dbReference type="SMART" id="SM00958">
    <property type="entry name" value="SecA_PP_bind"/>
    <property type="match status" value="1"/>
</dbReference>
<dbReference type="SUPFAM" id="SSF81886">
    <property type="entry name" value="Helical scaffold and wing domains of SecA"/>
    <property type="match status" value="1"/>
</dbReference>
<dbReference type="SUPFAM" id="SSF52540">
    <property type="entry name" value="P-loop containing nucleoside triphosphate hydrolases"/>
    <property type="match status" value="2"/>
</dbReference>
<dbReference type="SUPFAM" id="SSF81767">
    <property type="entry name" value="Pre-protein crosslinking domain of SecA"/>
    <property type="match status" value="1"/>
</dbReference>
<dbReference type="PROSITE" id="PS01312">
    <property type="entry name" value="SECA"/>
    <property type="match status" value="1"/>
</dbReference>
<dbReference type="PROSITE" id="PS51196">
    <property type="entry name" value="SECA_MOTOR_DEAD"/>
    <property type="match status" value="1"/>
</dbReference>
<comment type="function">
    <text evidence="1">Part of the Sec protein translocase complex. Interacts with the SecYEG preprotein conducting channel. Has a central role in coupling the hydrolysis of ATP to the transfer of proteins into and across the cell membrane, serving both as a receptor for the preprotein-SecB complex and as an ATP-driven molecular motor driving the stepwise translocation of polypeptide chains across the membrane.</text>
</comment>
<comment type="catalytic activity">
    <reaction evidence="1">
        <text>ATP + H2O + cellular proteinSide 1 = ADP + phosphate + cellular proteinSide 2.</text>
        <dbReference type="EC" id="7.4.2.8"/>
    </reaction>
</comment>
<comment type="cofactor">
    <cofactor evidence="1">
        <name>Zn(2+)</name>
        <dbReference type="ChEBI" id="CHEBI:29105"/>
    </cofactor>
    <text evidence="1">May bind 1 zinc ion per subunit.</text>
</comment>
<comment type="subunit">
    <text evidence="1">Monomer and homodimer. Part of the essential Sec protein translocation apparatus which comprises SecA, SecYEG and auxiliary proteins SecDF-YajC and YidC.</text>
</comment>
<comment type="subcellular location">
    <subcellularLocation>
        <location evidence="1">Cell inner membrane</location>
        <topology evidence="1">Peripheral membrane protein</topology>
        <orientation evidence="1">Cytoplasmic side</orientation>
    </subcellularLocation>
    <subcellularLocation>
        <location evidence="1">Cytoplasm</location>
    </subcellularLocation>
    <text evidence="1">Distribution is 50-50.</text>
</comment>
<comment type="similarity">
    <text evidence="1">Belongs to the SecA family.</text>
</comment>
<organism>
    <name type="scientific">Chelativorans sp. (strain BNC1)</name>
    <dbReference type="NCBI Taxonomy" id="266779"/>
    <lineage>
        <taxon>Bacteria</taxon>
        <taxon>Pseudomonadati</taxon>
        <taxon>Pseudomonadota</taxon>
        <taxon>Alphaproteobacteria</taxon>
        <taxon>Hyphomicrobiales</taxon>
        <taxon>Phyllobacteriaceae</taxon>
        <taxon>Chelativorans</taxon>
    </lineage>
</organism>